<accession>Q01VA8</accession>
<keyword id="KW-0678">Repressor</keyword>
<keyword id="KW-0687">Ribonucleoprotein</keyword>
<keyword id="KW-0689">Ribosomal protein</keyword>
<keyword id="KW-0694">RNA-binding</keyword>
<keyword id="KW-0699">rRNA-binding</keyword>
<keyword id="KW-0810">Translation regulation</keyword>
<keyword id="KW-0820">tRNA-binding</keyword>
<reference key="1">
    <citation type="journal article" date="2009" name="Appl. Environ. Microbiol.">
        <title>Three genomes from the phylum Acidobacteria provide insight into the lifestyles of these microorganisms in soils.</title>
        <authorList>
            <person name="Ward N.L."/>
            <person name="Challacombe J.F."/>
            <person name="Janssen P.H."/>
            <person name="Henrissat B."/>
            <person name="Coutinho P.M."/>
            <person name="Wu M."/>
            <person name="Xie G."/>
            <person name="Haft D.H."/>
            <person name="Sait M."/>
            <person name="Badger J."/>
            <person name="Barabote R.D."/>
            <person name="Bradley B."/>
            <person name="Brettin T.S."/>
            <person name="Brinkac L.M."/>
            <person name="Bruce D."/>
            <person name="Creasy T."/>
            <person name="Daugherty S.C."/>
            <person name="Davidsen T.M."/>
            <person name="DeBoy R.T."/>
            <person name="Detter J.C."/>
            <person name="Dodson R.J."/>
            <person name="Durkin A.S."/>
            <person name="Ganapathy A."/>
            <person name="Gwinn-Giglio M."/>
            <person name="Han C.S."/>
            <person name="Khouri H."/>
            <person name="Kiss H."/>
            <person name="Kothari S.P."/>
            <person name="Madupu R."/>
            <person name="Nelson K.E."/>
            <person name="Nelson W.C."/>
            <person name="Paulsen I."/>
            <person name="Penn K."/>
            <person name="Ren Q."/>
            <person name="Rosovitz M.J."/>
            <person name="Selengut J.D."/>
            <person name="Shrivastava S."/>
            <person name="Sullivan S.A."/>
            <person name="Tapia R."/>
            <person name="Thompson L.S."/>
            <person name="Watkins K.L."/>
            <person name="Yang Q."/>
            <person name="Yu C."/>
            <person name="Zafar N."/>
            <person name="Zhou L."/>
            <person name="Kuske C.R."/>
        </authorList>
    </citation>
    <scope>NUCLEOTIDE SEQUENCE [LARGE SCALE GENOMIC DNA]</scope>
    <source>
        <strain>Ellin6076</strain>
    </source>
</reference>
<feature type="chain" id="PRO_0000308109" description="Large ribosomal subunit protein uL1">
    <location>
        <begin position="1"/>
        <end position="237"/>
    </location>
</feature>
<organism>
    <name type="scientific">Solibacter usitatus (strain Ellin6076)</name>
    <dbReference type="NCBI Taxonomy" id="234267"/>
    <lineage>
        <taxon>Bacteria</taxon>
        <taxon>Pseudomonadati</taxon>
        <taxon>Acidobacteriota</taxon>
        <taxon>Terriglobia</taxon>
        <taxon>Bryobacterales</taxon>
        <taxon>Solibacteraceae</taxon>
        <taxon>Candidatus Solibacter</taxon>
    </lineage>
</organism>
<gene>
    <name evidence="1" type="primary">rplA</name>
    <name type="ordered locus">Acid_5460</name>
</gene>
<evidence type="ECO:0000255" key="1">
    <source>
        <dbReference type="HAMAP-Rule" id="MF_01318"/>
    </source>
</evidence>
<evidence type="ECO:0000305" key="2"/>
<comment type="function">
    <text evidence="1">Binds directly to 23S rRNA. The L1 stalk is quite mobile in the ribosome, and is involved in E site tRNA release.</text>
</comment>
<comment type="function">
    <text evidence="1">Protein L1 is also a translational repressor protein, it controls the translation of the L11 operon by binding to its mRNA.</text>
</comment>
<comment type="subunit">
    <text evidence="1">Part of the 50S ribosomal subunit.</text>
</comment>
<comment type="similarity">
    <text evidence="1">Belongs to the universal ribosomal protein uL1 family.</text>
</comment>
<protein>
    <recommendedName>
        <fullName evidence="1">Large ribosomal subunit protein uL1</fullName>
    </recommendedName>
    <alternativeName>
        <fullName evidence="2">50S ribosomal protein L1</fullName>
    </alternativeName>
</protein>
<dbReference type="EMBL" id="CP000473">
    <property type="protein sequence ID" value="ABJ86407.1"/>
    <property type="molecule type" value="Genomic_DNA"/>
</dbReference>
<dbReference type="SMR" id="Q01VA8"/>
<dbReference type="FunCoup" id="Q01VA8">
    <property type="interactions" value="767"/>
</dbReference>
<dbReference type="STRING" id="234267.Acid_5460"/>
<dbReference type="KEGG" id="sus:Acid_5460"/>
<dbReference type="eggNOG" id="COG0081">
    <property type="taxonomic scope" value="Bacteria"/>
</dbReference>
<dbReference type="HOGENOM" id="CLU_062853_0_0_0"/>
<dbReference type="InParanoid" id="Q01VA8"/>
<dbReference type="OrthoDB" id="9803740at2"/>
<dbReference type="GO" id="GO:0015934">
    <property type="term" value="C:large ribosomal subunit"/>
    <property type="evidence" value="ECO:0007669"/>
    <property type="project" value="InterPro"/>
</dbReference>
<dbReference type="GO" id="GO:0019843">
    <property type="term" value="F:rRNA binding"/>
    <property type="evidence" value="ECO:0007669"/>
    <property type="project" value="UniProtKB-UniRule"/>
</dbReference>
<dbReference type="GO" id="GO:0003735">
    <property type="term" value="F:structural constituent of ribosome"/>
    <property type="evidence" value="ECO:0007669"/>
    <property type="project" value="InterPro"/>
</dbReference>
<dbReference type="GO" id="GO:0000049">
    <property type="term" value="F:tRNA binding"/>
    <property type="evidence" value="ECO:0007669"/>
    <property type="project" value="UniProtKB-KW"/>
</dbReference>
<dbReference type="GO" id="GO:0006417">
    <property type="term" value="P:regulation of translation"/>
    <property type="evidence" value="ECO:0007669"/>
    <property type="project" value="UniProtKB-KW"/>
</dbReference>
<dbReference type="GO" id="GO:0006412">
    <property type="term" value="P:translation"/>
    <property type="evidence" value="ECO:0007669"/>
    <property type="project" value="UniProtKB-UniRule"/>
</dbReference>
<dbReference type="CDD" id="cd00403">
    <property type="entry name" value="Ribosomal_L1"/>
    <property type="match status" value="1"/>
</dbReference>
<dbReference type="FunFam" id="3.40.50.790:FF:000001">
    <property type="entry name" value="50S ribosomal protein L1"/>
    <property type="match status" value="1"/>
</dbReference>
<dbReference type="Gene3D" id="3.30.190.20">
    <property type="match status" value="1"/>
</dbReference>
<dbReference type="Gene3D" id="3.40.50.790">
    <property type="match status" value="1"/>
</dbReference>
<dbReference type="HAMAP" id="MF_01318_B">
    <property type="entry name" value="Ribosomal_uL1_B"/>
    <property type="match status" value="1"/>
</dbReference>
<dbReference type="InterPro" id="IPR005878">
    <property type="entry name" value="Ribosom_uL1_bac-type"/>
</dbReference>
<dbReference type="InterPro" id="IPR002143">
    <property type="entry name" value="Ribosomal_uL1"/>
</dbReference>
<dbReference type="InterPro" id="IPR023674">
    <property type="entry name" value="Ribosomal_uL1-like"/>
</dbReference>
<dbReference type="InterPro" id="IPR028364">
    <property type="entry name" value="Ribosomal_uL1/biogenesis"/>
</dbReference>
<dbReference type="InterPro" id="IPR016095">
    <property type="entry name" value="Ribosomal_uL1_3-a/b-sand"/>
</dbReference>
<dbReference type="InterPro" id="IPR023673">
    <property type="entry name" value="Ribosomal_uL1_CS"/>
</dbReference>
<dbReference type="NCBIfam" id="TIGR01169">
    <property type="entry name" value="rplA_bact"/>
    <property type="match status" value="1"/>
</dbReference>
<dbReference type="PANTHER" id="PTHR36427">
    <property type="entry name" value="54S RIBOSOMAL PROTEIN L1, MITOCHONDRIAL"/>
    <property type="match status" value="1"/>
</dbReference>
<dbReference type="PANTHER" id="PTHR36427:SF3">
    <property type="entry name" value="LARGE RIBOSOMAL SUBUNIT PROTEIN UL1M"/>
    <property type="match status" value="1"/>
</dbReference>
<dbReference type="Pfam" id="PF00687">
    <property type="entry name" value="Ribosomal_L1"/>
    <property type="match status" value="1"/>
</dbReference>
<dbReference type="PIRSF" id="PIRSF002155">
    <property type="entry name" value="Ribosomal_L1"/>
    <property type="match status" value="1"/>
</dbReference>
<dbReference type="SUPFAM" id="SSF56808">
    <property type="entry name" value="Ribosomal protein L1"/>
    <property type="match status" value="1"/>
</dbReference>
<dbReference type="PROSITE" id="PS01199">
    <property type="entry name" value="RIBOSOMAL_L1"/>
    <property type="match status" value="1"/>
</dbReference>
<proteinExistence type="inferred from homology"/>
<sequence length="237" mass="25219">MARKPGKQYQAAQKQVESKEYQLEEAIPLIKKIKFAKFDETVEVHMRLGVDPKHADQMVRGTVLMPNGLGKSKKVLVIASGDKQREATEAGADFVGGEDMVNKIQSESWTDYDAVIATPDMMRSVGKLGKVLGPRGLMPNPKTGTVTVDVAKAIAEIKAGKVEFRVDKTGIIHAPVGKISFSADKLVENASSLIAAVIKAKPAVAKGKYVRSATVCSTMGPGVAIDTAPFSVKAAAV</sequence>
<name>RL1_SOLUE</name>